<feature type="chain" id="PRO_1000058030" description="Phosphoglycerate kinase">
    <location>
        <begin position="1"/>
        <end position="402"/>
    </location>
</feature>
<feature type="binding site" evidence="1">
    <location>
        <begin position="24"/>
        <end position="26"/>
    </location>
    <ligand>
        <name>substrate</name>
    </ligand>
</feature>
<feature type="binding site" evidence="1">
    <location>
        <position position="40"/>
    </location>
    <ligand>
        <name>substrate</name>
    </ligand>
</feature>
<feature type="binding site" evidence="1">
    <location>
        <begin position="63"/>
        <end position="66"/>
    </location>
    <ligand>
        <name>substrate</name>
    </ligand>
</feature>
<feature type="binding site" evidence="1">
    <location>
        <position position="122"/>
    </location>
    <ligand>
        <name>substrate</name>
    </ligand>
</feature>
<feature type="binding site" evidence="1">
    <location>
        <position position="155"/>
    </location>
    <ligand>
        <name>substrate</name>
    </ligand>
</feature>
<feature type="binding site" evidence="1">
    <location>
        <position position="206"/>
    </location>
    <ligand>
        <name>ATP</name>
        <dbReference type="ChEBI" id="CHEBI:30616"/>
    </ligand>
</feature>
<feature type="binding site" evidence="1">
    <location>
        <position position="297"/>
    </location>
    <ligand>
        <name>ATP</name>
        <dbReference type="ChEBI" id="CHEBI:30616"/>
    </ligand>
</feature>
<feature type="binding site" evidence="1">
    <location>
        <position position="328"/>
    </location>
    <ligand>
        <name>ATP</name>
        <dbReference type="ChEBI" id="CHEBI:30616"/>
    </ligand>
</feature>
<feature type="binding site" evidence="1">
    <location>
        <begin position="358"/>
        <end position="361"/>
    </location>
    <ligand>
        <name>ATP</name>
        <dbReference type="ChEBI" id="CHEBI:30616"/>
    </ligand>
</feature>
<sequence>MSKLSLSSLDKTNLEGKKVLVRVDFNVPLNEDGQITDDTRIRAAIPTIEYLINHSAKVILAAHFGRPKGQVNEKMRLTPVAARLSELLGQNVALTNSCIGDEAVAQSNSLSNGDVLLLENVRFFGEEEKNDLEFAKKLASHADMYVNDAFGAAHRAHASTQGVTNYLSPSVAGFLLEKELKYLQGAIDSPKRPLAAIVGGSKVSSKIGVLDSLLDKCDKIMIGGGMIFTFYKARGLDVGKSLVEEDKLELAKDLEAKAKAKGVELLLPTDVVLADEFSPDANSKISQIDSISGNWMGLDIGPDSIKVFQNALAECKTIIWNGPMGVFEFDKFADGTNAIATTLADLSAFSEVCTIIGGGDSVAAVEKAGLAEKMSHISTGGGASLELLEGKTLPGVAALNDA</sequence>
<name>PGK_PROM9</name>
<reference key="1">
    <citation type="journal article" date="2006" name="Science">
        <title>Genomic islands and the ecology and evolution of Prochlorococcus.</title>
        <authorList>
            <person name="Coleman M.L."/>
            <person name="Sullivan M.B."/>
            <person name="Martiny A.C."/>
            <person name="Steglich C."/>
            <person name="Barry K."/>
            <person name="Delong E.F."/>
            <person name="Chisholm S.W."/>
        </authorList>
    </citation>
    <scope>NUCLEOTIDE SEQUENCE [LARGE SCALE GENOMIC DNA]</scope>
    <source>
        <strain>MIT 9312</strain>
    </source>
</reference>
<dbReference type="EC" id="2.7.2.3" evidence="1"/>
<dbReference type="EMBL" id="CP000111">
    <property type="protein sequence ID" value="ABB49259.1"/>
    <property type="molecule type" value="Genomic_DNA"/>
</dbReference>
<dbReference type="RefSeq" id="WP_011375763.1">
    <property type="nucleotide sequence ID" value="NC_007577.1"/>
</dbReference>
<dbReference type="SMR" id="Q31CY6"/>
<dbReference type="STRING" id="74546.PMT9312_0197"/>
<dbReference type="KEGG" id="pmi:PMT9312_0197"/>
<dbReference type="eggNOG" id="COG0126">
    <property type="taxonomic scope" value="Bacteria"/>
</dbReference>
<dbReference type="HOGENOM" id="CLU_025427_0_2_3"/>
<dbReference type="OrthoDB" id="9808460at2"/>
<dbReference type="UniPathway" id="UPA00109">
    <property type="reaction ID" value="UER00185"/>
</dbReference>
<dbReference type="Proteomes" id="UP000002715">
    <property type="component" value="Chromosome"/>
</dbReference>
<dbReference type="GO" id="GO:0005829">
    <property type="term" value="C:cytosol"/>
    <property type="evidence" value="ECO:0007669"/>
    <property type="project" value="TreeGrafter"/>
</dbReference>
<dbReference type="GO" id="GO:0043531">
    <property type="term" value="F:ADP binding"/>
    <property type="evidence" value="ECO:0007669"/>
    <property type="project" value="TreeGrafter"/>
</dbReference>
<dbReference type="GO" id="GO:0005524">
    <property type="term" value="F:ATP binding"/>
    <property type="evidence" value="ECO:0007669"/>
    <property type="project" value="UniProtKB-KW"/>
</dbReference>
<dbReference type="GO" id="GO:0004618">
    <property type="term" value="F:phosphoglycerate kinase activity"/>
    <property type="evidence" value="ECO:0007669"/>
    <property type="project" value="UniProtKB-UniRule"/>
</dbReference>
<dbReference type="GO" id="GO:0006094">
    <property type="term" value="P:gluconeogenesis"/>
    <property type="evidence" value="ECO:0007669"/>
    <property type="project" value="TreeGrafter"/>
</dbReference>
<dbReference type="GO" id="GO:0006096">
    <property type="term" value="P:glycolytic process"/>
    <property type="evidence" value="ECO:0007669"/>
    <property type="project" value="UniProtKB-UniRule"/>
</dbReference>
<dbReference type="CDD" id="cd00318">
    <property type="entry name" value="Phosphoglycerate_kinase"/>
    <property type="match status" value="1"/>
</dbReference>
<dbReference type="FunFam" id="3.40.50.1260:FF:000003">
    <property type="entry name" value="Phosphoglycerate kinase"/>
    <property type="match status" value="1"/>
</dbReference>
<dbReference type="FunFam" id="3.40.50.1260:FF:000006">
    <property type="entry name" value="Phosphoglycerate kinase"/>
    <property type="match status" value="1"/>
</dbReference>
<dbReference type="Gene3D" id="3.40.50.1260">
    <property type="entry name" value="Phosphoglycerate kinase, N-terminal domain"/>
    <property type="match status" value="2"/>
</dbReference>
<dbReference type="HAMAP" id="MF_00145">
    <property type="entry name" value="Phosphoglyc_kinase"/>
    <property type="match status" value="1"/>
</dbReference>
<dbReference type="InterPro" id="IPR001576">
    <property type="entry name" value="Phosphoglycerate_kinase"/>
</dbReference>
<dbReference type="InterPro" id="IPR015911">
    <property type="entry name" value="Phosphoglycerate_kinase_CS"/>
</dbReference>
<dbReference type="InterPro" id="IPR015824">
    <property type="entry name" value="Phosphoglycerate_kinase_N"/>
</dbReference>
<dbReference type="InterPro" id="IPR036043">
    <property type="entry name" value="Phosphoglycerate_kinase_sf"/>
</dbReference>
<dbReference type="PANTHER" id="PTHR11406">
    <property type="entry name" value="PHOSPHOGLYCERATE KINASE"/>
    <property type="match status" value="1"/>
</dbReference>
<dbReference type="PANTHER" id="PTHR11406:SF23">
    <property type="entry name" value="PHOSPHOGLYCERATE KINASE 1, CHLOROPLASTIC-RELATED"/>
    <property type="match status" value="1"/>
</dbReference>
<dbReference type="Pfam" id="PF00162">
    <property type="entry name" value="PGK"/>
    <property type="match status" value="1"/>
</dbReference>
<dbReference type="PIRSF" id="PIRSF000724">
    <property type="entry name" value="Pgk"/>
    <property type="match status" value="1"/>
</dbReference>
<dbReference type="PRINTS" id="PR00477">
    <property type="entry name" value="PHGLYCKINASE"/>
</dbReference>
<dbReference type="SUPFAM" id="SSF53748">
    <property type="entry name" value="Phosphoglycerate kinase"/>
    <property type="match status" value="1"/>
</dbReference>
<dbReference type="PROSITE" id="PS00111">
    <property type="entry name" value="PGLYCERATE_KINASE"/>
    <property type="match status" value="1"/>
</dbReference>
<protein>
    <recommendedName>
        <fullName evidence="1">Phosphoglycerate kinase</fullName>
        <ecNumber evidence="1">2.7.2.3</ecNumber>
    </recommendedName>
</protein>
<keyword id="KW-0067">ATP-binding</keyword>
<keyword id="KW-0963">Cytoplasm</keyword>
<keyword id="KW-0324">Glycolysis</keyword>
<keyword id="KW-0418">Kinase</keyword>
<keyword id="KW-0547">Nucleotide-binding</keyword>
<keyword id="KW-0808">Transferase</keyword>
<organism>
    <name type="scientific">Prochlorococcus marinus (strain MIT 9312)</name>
    <dbReference type="NCBI Taxonomy" id="74546"/>
    <lineage>
        <taxon>Bacteria</taxon>
        <taxon>Bacillati</taxon>
        <taxon>Cyanobacteriota</taxon>
        <taxon>Cyanophyceae</taxon>
        <taxon>Synechococcales</taxon>
        <taxon>Prochlorococcaceae</taxon>
        <taxon>Prochlorococcus</taxon>
    </lineage>
</organism>
<gene>
    <name evidence="1" type="primary">pgk</name>
    <name type="ordered locus">PMT9312_0197</name>
</gene>
<comment type="catalytic activity">
    <reaction evidence="1">
        <text>(2R)-3-phosphoglycerate + ATP = (2R)-3-phospho-glyceroyl phosphate + ADP</text>
        <dbReference type="Rhea" id="RHEA:14801"/>
        <dbReference type="ChEBI" id="CHEBI:30616"/>
        <dbReference type="ChEBI" id="CHEBI:57604"/>
        <dbReference type="ChEBI" id="CHEBI:58272"/>
        <dbReference type="ChEBI" id="CHEBI:456216"/>
        <dbReference type="EC" id="2.7.2.3"/>
    </reaction>
</comment>
<comment type="pathway">
    <text evidence="1">Carbohydrate degradation; glycolysis; pyruvate from D-glyceraldehyde 3-phosphate: step 2/5.</text>
</comment>
<comment type="subunit">
    <text evidence="1">Monomer.</text>
</comment>
<comment type="subcellular location">
    <subcellularLocation>
        <location evidence="1">Cytoplasm</location>
    </subcellularLocation>
</comment>
<comment type="similarity">
    <text evidence="1">Belongs to the phosphoglycerate kinase family.</text>
</comment>
<evidence type="ECO:0000255" key="1">
    <source>
        <dbReference type="HAMAP-Rule" id="MF_00145"/>
    </source>
</evidence>
<proteinExistence type="inferred from homology"/>
<accession>Q31CY6</accession>